<gene>
    <name evidence="2" type="primary">RPL33A</name>
    <name type="synonym">RPL33</name>
    <name type="ordered locus">orf19.6882.1</name>
    <name type="ORF">CAALFM_C205710CA</name>
</gene>
<organism>
    <name type="scientific">Candida albicans (strain SC5314 / ATCC MYA-2876)</name>
    <name type="common">Yeast</name>
    <dbReference type="NCBI Taxonomy" id="237561"/>
    <lineage>
        <taxon>Eukaryota</taxon>
        <taxon>Fungi</taxon>
        <taxon>Dikarya</taxon>
        <taxon>Ascomycota</taxon>
        <taxon>Saccharomycotina</taxon>
        <taxon>Pichiomycetes</taxon>
        <taxon>Debaryomycetaceae</taxon>
        <taxon>Candida/Lodderomyces clade</taxon>
        <taxon>Candida</taxon>
    </lineage>
</organism>
<evidence type="ECO:0000269" key="1">
    <source>
    </source>
</evidence>
<evidence type="ECO:0000303" key="2">
    <source>
    </source>
</evidence>
<evidence type="ECO:0000305" key="3"/>
<evidence type="ECO:0000305" key="4">
    <source>
    </source>
</evidence>
<evidence type="ECO:0007744" key="5">
    <source>
        <dbReference type="PDB" id="7PZY"/>
    </source>
</evidence>
<evidence type="ECO:0007744" key="6">
    <source>
        <dbReference type="PDB" id="7Q0F"/>
    </source>
</evidence>
<evidence type="ECO:0007744" key="7">
    <source>
        <dbReference type="PDB" id="7Q0P"/>
    </source>
</evidence>
<dbReference type="EMBL" id="CP017624">
    <property type="protein sequence ID" value="AOW27582.1"/>
    <property type="molecule type" value="Genomic_DNA"/>
</dbReference>
<dbReference type="RefSeq" id="XP_019330781.1">
    <property type="nucleotide sequence ID" value="XM_019475236.1"/>
</dbReference>
<dbReference type="PDB" id="7PZY">
    <property type="method" value="EM"/>
    <property type="resolution" value="2.32 A"/>
    <property type="chains" value="AG=1-107"/>
</dbReference>
<dbReference type="PDB" id="7Q08">
    <property type="method" value="EM"/>
    <property type="resolution" value="2.56 A"/>
    <property type="chains" value="AG=1-107"/>
</dbReference>
<dbReference type="PDB" id="7Q0F">
    <property type="method" value="EM"/>
    <property type="resolution" value="2.64 A"/>
    <property type="chains" value="AG=1-107"/>
</dbReference>
<dbReference type="PDB" id="7Q0P">
    <property type="method" value="EM"/>
    <property type="resolution" value="2.77 A"/>
    <property type="chains" value="AG=1-107"/>
</dbReference>
<dbReference type="PDB" id="7Q0R">
    <property type="method" value="EM"/>
    <property type="resolution" value="2.67 A"/>
    <property type="chains" value="AG=1-107"/>
</dbReference>
<dbReference type="PDB" id="8C3A">
    <property type="method" value="X-ray"/>
    <property type="resolution" value="3.00 A"/>
    <property type="chains" value="AG/CA=1-107"/>
</dbReference>
<dbReference type="PDB" id="8OGJ">
    <property type="method" value="EM"/>
    <property type="resolution" value="3.10 A"/>
    <property type="chains" value="AG=1-107"/>
</dbReference>
<dbReference type="PDB" id="8OH6">
    <property type="method" value="X-ray"/>
    <property type="resolution" value="3.35 A"/>
    <property type="chains" value="AG/CA=1-107"/>
</dbReference>
<dbReference type="PDB" id="8OI5">
    <property type="method" value="X-ray"/>
    <property type="resolution" value="2.90 A"/>
    <property type="chains" value="AG/CA=1-107"/>
</dbReference>
<dbReference type="PDB" id="8OJ3">
    <property type="method" value="X-ray"/>
    <property type="resolution" value="3.50 A"/>
    <property type="chains" value="AG/CA=1-107"/>
</dbReference>
<dbReference type="PDBsum" id="7PZY"/>
<dbReference type="PDBsum" id="7Q08"/>
<dbReference type="PDBsum" id="7Q0F"/>
<dbReference type="PDBsum" id="7Q0P"/>
<dbReference type="PDBsum" id="7Q0R"/>
<dbReference type="PDBsum" id="8C3A"/>
<dbReference type="PDBsum" id="8OGJ"/>
<dbReference type="PDBsum" id="8OH6"/>
<dbReference type="PDBsum" id="8OI5"/>
<dbReference type="PDBsum" id="8OJ3"/>
<dbReference type="SMR" id="A0A1D8PHH4"/>
<dbReference type="FunCoup" id="A0A1D8PHH4">
    <property type="interactions" value="872"/>
</dbReference>
<dbReference type="STRING" id="237561.A0A1D8PHH4"/>
<dbReference type="EnsemblFungi" id="C2_05710C_A-T">
    <property type="protein sequence ID" value="C2_05710C_A-T-p1"/>
    <property type="gene ID" value="C2_05710C_A"/>
</dbReference>
<dbReference type="GeneID" id="30515127"/>
<dbReference type="KEGG" id="cal:CAALFM_C205710CA"/>
<dbReference type="CGD" id="CAL0000183633">
    <property type="gene designation" value="orf19.6882.1"/>
</dbReference>
<dbReference type="VEuPathDB" id="FungiDB:C2_05710C_A"/>
<dbReference type="eggNOG" id="KOG0887">
    <property type="taxonomic scope" value="Eukaryota"/>
</dbReference>
<dbReference type="InParanoid" id="A0A1D8PHH4"/>
<dbReference type="OMA" id="YRTNKHH"/>
<dbReference type="OrthoDB" id="1166329at2759"/>
<dbReference type="Proteomes" id="UP000000559">
    <property type="component" value="Chromosome 2"/>
</dbReference>
<dbReference type="GO" id="GO:0022625">
    <property type="term" value="C:cytosolic large ribosomal subunit"/>
    <property type="evidence" value="ECO:0000318"/>
    <property type="project" value="GO_Central"/>
</dbReference>
<dbReference type="GO" id="GO:0003735">
    <property type="term" value="F:structural constituent of ribosome"/>
    <property type="evidence" value="ECO:0000318"/>
    <property type="project" value="GO_Central"/>
</dbReference>
<dbReference type="GO" id="GO:0002181">
    <property type="term" value="P:cytoplasmic translation"/>
    <property type="evidence" value="ECO:0000318"/>
    <property type="project" value="GO_Central"/>
</dbReference>
<dbReference type="GO" id="GO:0042273">
    <property type="term" value="P:ribosomal large subunit biogenesis"/>
    <property type="evidence" value="ECO:0000318"/>
    <property type="project" value="GO_Central"/>
</dbReference>
<dbReference type="FunFam" id="2.40.10.190:FF:000001">
    <property type="entry name" value="60S ribosomal protein L35a"/>
    <property type="match status" value="1"/>
</dbReference>
<dbReference type="Gene3D" id="2.40.10.190">
    <property type="entry name" value="translation elongation factor selb, chain A, domain 4"/>
    <property type="match status" value="1"/>
</dbReference>
<dbReference type="HAMAP" id="MF_00573">
    <property type="entry name" value="Ribosomal_eL33"/>
    <property type="match status" value="1"/>
</dbReference>
<dbReference type="InterPro" id="IPR001780">
    <property type="entry name" value="Ribosomal_eL33"/>
</dbReference>
<dbReference type="InterPro" id="IPR018266">
    <property type="entry name" value="Ribosomal_eL33_CS"/>
</dbReference>
<dbReference type="InterPro" id="IPR038661">
    <property type="entry name" value="Ribosomal_eL33_sf"/>
</dbReference>
<dbReference type="InterPro" id="IPR009000">
    <property type="entry name" value="Transl_B-barrel_sf"/>
</dbReference>
<dbReference type="PANTHER" id="PTHR10902">
    <property type="entry name" value="60S RIBOSOMAL PROTEIN L35A"/>
    <property type="match status" value="1"/>
</dbReference>
<dbReference type="Pfam" id="PF01247">
    <property type="entry name" value="Ribosomal_L35Ae"/>
    <property type="match status" value="1"/>
</dbReference>
<dbReference type="SUPFAM" id="SSF50447">
    <property type="entry name" value="Translation proteins"/>
    <property type="match status" value="1"/>
</dbReference>
<dbReference type="PROSITE" id="PS01105">
    <property type="entry name" value="RIBOSOMAL_L35AE"/>
    <property type="match status" value="1"/>
</dbReference>
<sequence length="107" mass="12114">MAESHRLYVKGKHISYQRSKSVTNPNVSLIQIEGVASPKDAKFYLGKRIAYVYRAPKEIRGSKIRVIWGKVTRTHGNNGLVRANFKKNLPPKTFGASVRIMLYPSNI</sequence>
<keyword id="KW-0002">3D-structure</keyword>
<keyword id="KW-0963">Cytoplasm</keyword>
<keyword id="KW-1185">Reference proteome</keyword>
<keyword id="KW-0687">Ribonucleoprotein</keyword>
<keyword id="KW-0689">Ribosomal protein</keyword>
<proteinExistence type="evidence at protein level"/>
<name>RL33A_CANAL</name>
<comment type="function">
    <text evidence="4">Component of the ribosome, a large ribonucleoprotein complex responsible for the synthesis of proteins in the cell. The small ribosomal subunit (SSU) binds messenger RNAs (mRNAs) and translates the encoded message by selecting cognate aminoacyl-transfer RNA (tRNA) molecules. The large subunit (LSU) contains the ribosomal catalytic site termed the peptidyl transferase center (PTC), which catalyzes the formation of peptide bonds, thereby polymerizing the amino acids delivered by tRNAs into a polypeptide chain. The nascent polypeptides leave the ribosome through a tunnel in the LSU and interact with protein factors that function in enzymatic processing, targeting, and the membrane insertion of nascent chains at the exit of the ribosomal tunnel.</text>
</comment>
<comment type="subunit">
    <text evidence="1">Component of the large ribosomal subunit (PubMed:35613268). Mature ribosomes consist of a small (40S) and a large (60S) subunit (PubMed:35613268). The 40S subunit contains about 32 different proteins and 1 molecule of RNA (18S) (PubMed:35613268). The 60S subunit contains 45 different proteins and 3 molecules of RNA (25S, 5.8S and 5S) (PubMed:35613268).</text>
</comment>
<comment type="subcellular location">
    <subcellularLocation>
        <location evidence="4">Cytoplasm</location>
    </subcellularLocation>
</comment>
<comment type="similarity">
    <text evidence="3">Belongs to the eukaryotic ribosomal protein eL33 family.</text>
</comment>
<accession>A0A1D8PHH4</accession>
<protein>
    <recommendedName>
        <fullName evidence="2">Large ribosomal subunit protein eL33</fullName>
    </recommendedName>
    <alternativeName>
        <fullName>60S ribosomal protein L33-A</fullName>
    </alternativeName>
</protein>
<feature type="chain" id="PRO_0000456640" description="Large ribosomal subunit protein eL33">
    <location>
        <begin position="1"/>
        <end position="107"/>
    </location>
</feature>
<reference key="1">
    <citation type="journal article" date="2004" name="Proc. Natl. Acad. Sci. U.S.A.">
        <title>The diploid genome sequence of Candida albicans.</title>
        <authorList>
            <person name="Jones T."/>
            <person name="Federspiel N.A."/>
            <person name="Chibana H."/>
            <person name="Dungan J."/>
            <person name="Kalman S."/>
            <person name="Magee B.B."/>
            <person name="Newport G."/>
            <person name="Thorstenson Y.R."/>
            <person name="Agabian N."/>
            <person name="Magee P.T."/>
            <person name="Davis R.W."/>
            <person name="Scherer S."/>
        </authorList>
    </citation>
    <scope>NUCLEOTIDE SEQUENCE [LARGE SCALE GENOMIC DNA]</scope>
    <source>
        <strain>SC5314 / ATCC MYA-2876</strain>
    </source>
</reference>
<reference key="2">
    <citation type="journal article" date="2007" name="Genome Biol.">
        <title>Assembly of the Candida albicans genome into sixteen supercontigs aligned on the eight chromosomes.</title>
        <authorList>
            <person name="van het Hoog M."/>
            <person name="Rast T.J."/>
            <person name="Martchenko M."/>
            <person name="Grindle S."/>
            <person name="Dignard D."/>
            <person name="Hogues H."/>
            <person name="Cuomo C."/>
            <person name="Berriman M."/>
            <person name="Scherer S."/>
            <person name="Magee B.B."/>
            <person name="Whiteway M."/>
            <person name="Chibana H."/>
            <person name="Nantel A."/>
            <person name="Magee P.T."/>
        </authorList>
    </citation>
    <scope>GENOME REANNOTATION</scope>
    <source>
        <strain>SC5314 / ATCC MYA-2876</strain>
    </source>
</reference>
<reference key="3">
    <citation type="journal article" date="2013" name="Genome Biol.">
        <title>Assembly of a phased diploid Candida albicans genome facilitates allele-specific measurements and provides a simple model for repeat and indel structure.</title>
        <authorList>
            <person name="Muzzey D."/>
            <person name="Schwartz K."/>
            <person name="Weissman J.S."/>
            <person name="Sherlock G."/>
        </authorList>
    </citation>
    <scope>NUCLEOTIDE SEQUENCE [LARGE SCALE GENOMIC DNA]</scope>
    <scope>GENOME REANNOTATION</scope>
    <source>
        <strain>SC5314 / ATCC MYA-2876</strain>
    </source>
</reference>
<reference evidence="5 6 7" key="4">
    <citation type="journal article" date="2022" name="Sci. Adv.">
        <title>E-site drug specificity of the human pathogen Candida albicans ribosome.</title>
        <authorList>
            <person name="Zgadzay Y."/>
            <person name="Kolosova O."/>
            <person name="Stetsenko A."/>
            <person name="Wu C."/>
            <person name="Bruchlen D."/>
            <person name="Usachev K."/>
            <person name="Validov S."/>
            <person name="Jenner L."/>
            <person name="Rogachev A."/>
            <person name="Yusupova G."/>
            <person name="Sachs M.S."/>
            <person name="Guskov A."/>
            <person name="Yusupov M."/>
        </authorList>
    </citation>
    <scope>STRUCTURE BY ELECTRON MICROSCOPY (2.32 ANGSTROMS) OF THE 80S RIBOSOME</scope>
    <scope>SUBUNIT</scope>
</reference>